<gene>
    <name type="primary">herpud2</name>
    <name type="ORF">TEgg004b20.1</name>
</gene>
<organism>
    <name type="scientific">Xenopus tropicalis</name>
    <name type="common">Western clawed frog</name>
    <name type="synonym">Silurana tropicalis</name>
    <dbReference type="NCBI Taxonomy" id="8364"/>
    <lineage>
        <taxon>Eukaryota</taxon>
        <taxon>Metazoa</taxon>
        <taxon>Chordata</taxon>
        <taxon>Craniata</taxon>
        <taxon>Vertebrata</taxon>
        <taxon>Euteleostomi</taxon>
        <taxon>Amphibia</taxon>
        <taxon>Batrachia</taxon>
        <taxon>Anura</taxon>
        <taxon>Pipoidea</taxon>
        <taxon>Pipidae</taxon>
        <taxon>Xenopodinae</taxon>
        <taxon>Xenopus</taxon>
        <taxon>Silurana</taxon>
    </lineage>
</organism>
<feature type="chain" id="PRO_0000280632" description="Homocysteine-responsive endoplasmic reticulum-resident ubiquitin-like domain member 2 protein">
    <location>
        <begin position="1"/>
        <end position="399"/>
    </location>
</feature>
<feature type="transmembrane region" description="Helical" evidence="2">
    <location>
        <begin position="299"/>
        <end position="319"/>
    </location>
</feature>
<feature type="domain" description="Ubiquitin-like" evidence="3">
    <location>
        <begin position="10"/>
        <end position="89"/>
    </location>
</feature>
<feature type="region of interest" description="Disordered" evidence="4">
    <location>
        <begin position="88"/>
        <end position="144"/>
    </location>
</feature>
<feature type="region of interest" description="Disordered" evidence="4">
    <location>
        <begin position="211"/>
        <end position="250"/>
    </location>
</feature>
<feature type="compositionally biased region" description="Polar residues" evidence="4">
    <location>
        <begin position="95"/>
        <end position="106"/>
    </location>
</feature>
<feature type="compositionally biased region" description="Low complexity" evidence="4">
    <location>
        <begin position="107"/>
        <end position="124"/>
    </location>
</feature>
<feature type="compositionally biased region" description="Polar residues" evidence="4">
    <location>
        <begin position="211"/>
        <end position="221"/>
    </location>
</feature>
<feature type="compositionally biased region" description="Pro residues" evidence="4">
    <location>
        <begin position="234"/>
        <end position="246"/>
    </location>
</feature>
<accession>Q28DF1</accession>
<name>HERP2_XENTR</name>
<proteinExistence type="evidence at transcript level"/>
<sequence>MDQPVMDCPVTLVIKAPNQKYDDQTINCFLDWTVEKLKSHLSKVYPSKPLAKDQRLVYSGKLLLDHLLLKDVLRKQDEYHMVHLVCASRTPPSSPKASTSNKSMGTASISRSSSEHSGSASPASIRQDTSSTYPDPRPGDSIRHRHTSLMYNNLVHSHPFSYLRQEYALNPPPGQASPSTFPAYSAFTPLQMMWWQQLYARQYYIYSQATASNQSPSNGENAQPVPRPVINSESPPPNPPRAPPNVAPEMNPNIQMNAQGGPVMNEEDINRDWLDWMYTVSRAAILLSIVYFYSSFSRFVMVMGAMILVYMHQAGWFPLLQDEGQQHARDNAAEVNPDHVNNNDPQELEHRMDEGLQEEHNNNAGGNVVARRGVLASAWSFITTFFTSLIPEGPPQGAN</sequence>
<keyword id="KW-0472">Membrane</keyword>
<keyword id="KW-1185">Reference proteome</keyword>
<keyword id="KW-0812">Transmembrane</keyword>
<keyword id="KW-1133">Transmembrane helix</keyword>
<keyword id="KW-0834">Unfolded protein response</keyword>
<dbReference type="EMBL" id="CR855549">
    <property type="protein sequence ID" value="CAJ81769.1"/>
    <property type="molecule type" value="mRNA"/>
</dbReference>
<dbReference type="RefSeq" id="NP_001016818.1">
    <property type="nucleotide sequence ID" value="NM_001016818.2"/>
</dbReference>
<dbReference type="RefSeq" id="XP_012820186.1">
    <property type="nucleotide sequence ID" value="XM_012964732.2"/>
</dbReference>
<dbReference type="RefSeq" id="XP_012820187.1">
    <property type="nucleotide sequence ID" value="XM_012964733.1"/>
</dbReference>
<dbReference type="SMR" id="Q28DF1"/>
<dbReference type="FunCoup" id="Q28DF1">
    <property type="interactions" value="3526"/>
</dbReference>
<dbReference type="STRING" id="8364.ENSXETP00000005147"/>
<dbReference type="PaxDb" id="8364-ENSXETP00000028709"/>
<dbReference type="GeneID" id="549572"/>
<dbReference type="KEGG" id="xtr:549572"/>
<dbReference type="AGR" id="Xenbase:XB-GENE-5806725"/>
<dbReference type="CTD" id="64224"/>
<dbReference type="Xenbase" id="XB-GENE-5806725">
    <property type="gene designation" value="herpud2"/>
</dbReference>
<dbReference type="eggNOG" id="KOG4583">
    <property type="taxonomic scope" value="Eukaryota"/>
</dbReference>
<dbReference type="HOGENOM" id="CLU_058243_0_0_1"/>
<dbReference type="InParanoid" id="Q28DF1"/>
<dbReference type="OrthoDB" id="21589at2759"/>
<dbReference type="Proteomes" id="UP000008143">
    <property type="component" value="Chromosome 6"/>
</dbReference>
<dbReference type="Bgee" id="ENSXETG00000013111">
    <property type="expression patterns" value="Expressed in skeletal muscle tissue and 13 other cell types or tissues"/>
</dbReference>
<dbReference type="GO" id="GO:0016020">
    <property type="term" value="C:membrane"/>
    <property type="evidence" value="ECO:0007669"/>
    <property type="project" value="UniProtKB-SubCell"/>
</dbReference>
<dbReference type="GO" id="GO:0006986">
    <property type="term" value="P:response to unfolded protein"/>
    <property type="evidence" value="ECO:0007669"/>
    <property type="project" value="UniProtKB-KW"/>
</dbReference>
<dbReference type="CDD" id="cd17119">
    <property type="entry name" value="Ubl_HERP2"/>
    <property type="match status" value="1"/>
</dbReference>
<dbReference type="FunFam" id="3.10.20.90:FF:000046">
    <property type="entry name" value="Homocysteine-responsive endoplasmic reticulum-resident ubiquitin-like domain member 2 protein"/>
    <property type="match status" value="1"/>
</dbReference>
<dbReference type="Gene3D" id="3.10.20.90">
    <property type="entry name" value="Phosphatidylinositol 3-kinase Catalytic Subunit, Chain A, domain 1"/>
    <property type="match status" value="1"/>
</dbReference>
<dbReference type="InterPro" id="IPR039751">
    <property type="entry name" value="HERPUD1/2"/>
</dbReference>
<dbReference type="InterPro" id="IPR000626">
    <property type="entry name" value="Ubiquitin-like_dom"/>
</dbReference>
<dbReference type="InterPro" id="IPR029071">
    <property type="entry name" value="Ubiquitin-like_domsf"/>
</dbReference>
<dbReference type="PANTHER" id="PTHR12943:SF5">
    <property type="entry name" value="HOMOCYSTEINE-RESPONSIVE ENDOPLASMIC RETICULUM-RESIDENT UBIQUITIN-LIKE DOMAIN MEMBER 2 PROTEIN"/>
    <property type="match status" value="1"/>
</dbReference>
<dbReference type="PANTHER" id="PTHR12943">
    <property type="entry name" value="HOMOCYSTEINE-RESPONSIVE ENDOPLASMIC RETICULUM-RESIDENT UNIQUITIN-LIKE DOMAIN HERPUD PROTEIN FAMILY MEMBER"/>
    <property type="match status" value="1"/>
</dbReference>
<dbReference type="Pfam" id="PF00240">
    <property type="entry name" value="ubiquitin"/>
    <property type="match status" value="1"/>
</dbReference>
<dbReference type="SMART" id="SM00213">
    <property type="entry name" value="UBQ"/>
    <property type="match status" value="1"/>
</dbReference>
<dbReference type="SUPFAM" id="SSF54236">
    <property type="entry name" value="Ubiquitin-like"/>
    <property type="match status" value="1"/>
</dbReference>
<dbReference type="PROSITE" id="PS50053">
    <property type="entry name" value="UBIQUITIN_2"/>
    <property type="match status" value="1"/>
</dbReference>
<evidence type="ECO:0000250" key="1"/>
<evidence type="ECO:0000255" key="2"/>
<evidence type="ECO:0000255" key="3">
    <source>
        <dbReference type="PROSITE-ProRule" id="PRU00214"/>
    </source>
</evidence>
<evidence type="ECO:0000256" key="4">
    <source>
        <dbReference type="SAM" id="MobiDB-lite"/>
    </source>
</evidence>
<evidence type="ECO:0000305" key="5"/>
<reference key="1">
    <citation type="submission" date="2006-10" db="EMBL/GenBank/DDBJ databases">
        <authorList>
            <consortium name="Sanger Xenopus tropicalis EST/cDNA project"/>
        </authorList>
    </citation>
    <scope>NUCLEOTIDE SEQUENCE [LARGE SCALE MRNA]</scope>
    <source>
        <tissue>Egg</tissue>
    </source>
</reference>
<protein>
    <recommendedName>
        <fullName>Homocysteine-responsive endoplasmic reticulum-resident ubiquitin-like domain member 2 protein</fullName>
    </recommendedName>
</protein>
<comment type="function">
    <text evidence="1">Could be involved in the unfolded protein response (UPR) pathway.</text>
</comment>
<comment type="subcellular location">
    <subcellularLocation>
        <location evidence="5">Membrane</location>
        <topology evidence="5">Single-pass membrane protein</topology>
    </subcellularLocation>
</comment>